<gene>
    <name evidence="1" type="primary">cbiB</name>
    <name type="ordered locus">SARI_00854</name>
</gene>
<sequence length="319" mass="35616">MTILAWCIAWVLDFIIGDPQHWPHPVRWIGRLITFVQHIVRRYCHSDKALRIGGGVMWIVVVGATWGMAWGVLALAQRIHPWLGWSVEVWMIFTVLAGRSLARAAQDVERPLRENDLAESRIKLSWIVGRDTSQLQPEQINRAVVETVAENTVDGIIAPLFFLFLGGAPLAMAYKAVNTLDSMVGYKHEKYRAIGMVSARMDDVANYLPARLSWLLLGIAAGLCRLSGWRALRIGWRDRYNHSSPNCAWSEACVAGALGIQLGGPNNYFGERVDKPWIGDAQRDISVDDISRTIRLMWGASTLALALFIAARCWLSGVA</sequence>
<dbReference type="EMBL" id="CP000880">
    <property type="protein sequence ID" value="ABX20773.1"/>
    <property type="molecule type" value="Genomic_DNA"/>
</dbReference>
<dbReference type="STRING" id="41514.SARI_00854"/>
<dbReference type="KEGG" id="ses:SARI_00854"/>
<dbReference type="HOGENOM" id="CLU_054212_0_0_6"/>
<dbReference type="UniPathway" id="UPA00148"/>
<dbReference type="Proteomes" id="UP000002084">
    <property type="component" value="Chromosome"/>
</dbReference>
<dbReference type="GO" id="GO:0005886">
    <property type="term" value="C:plasma membrane"/>
    <property type="evidence" value="ECO:0007669"/>
    <property type="project" value="UniProtKB-SubCell"/>
</dbReference>
<dbReference type="GO" id="GO:0015420">
    <property type="term" value="F:ABC-type vitamin B12 transporter activity"/>
    <property type="evidence" value="ECO:0007669"/>
    <property type="project" value="UniProtKB-UniRule"/>
</dbReference>
<dbReference type="GO" id="GO:0048472">
    <property type="term" value="F:threonine-phosphate decarboxylase activity"/>
    <property type="evidence" value="ECO:0007669"/>
    <property type="project" value="InterPro"/>
</dbReference>
<dbReference type="GO" id="GO:0009236">
    <property type="term" value="P:cobalamin biosynthetic process"/>
    <property type="evidence" value="ECO:0007669"/>
    <property type="project" value="UniProtKB-UniRule"/>
</dbReference>
<dbReference type="HAMAP" id="MF_00024">
    <property type="entry name" value="CobD_CbiB"/>
    <property type="match status" value="1"/>
</dbReference>
<dbReference type="InterPro" id="IPR004485">
    <property type="entry name" value="Cobalamin_biosynth_CobD/CbiB"/>
</dbReference>
<dbReference type="NCBIfam" id="TIGR00380">
    <property type="entry name" value="cobal_cbiB"/>
    <property type="match status" value="1"/>
</dbReference>
<dbReference type="PANTHER" id="PTHR34308">
    <property type="entry name" value="COBALAMIN BIOSYNTHESIS PROTEIN CBIB"/>
    <property type="match status" value="1"/>
</dbReference>
<dbReference type="PANTHER" id="PTHR34308:SF1">
    <property type="entry name" value="COBALAMIN BIOSYNTHESIS PROTEIN CBIB"/>
    <property type="match status" value="1"/>
</dbReference>
<dbReference type="Pfam" id="PF03186">
    <property type="entry name" value="CobD_Cbib"/>
    <property type="match status" value="1"/>
</dbReference>
<organism>
    <name type="scientific">Salmonella arizonae (strain ATCC BAA-731 / CDC346-86 / RSK2980)</name>
    <dbReference type="NCBI Taxonomy" id="41514"/>
    <lineage>
        <taxon>Bacteria</taxon>
        <taxon>Pseudomonadati</taxon>
        <taxon>Pseudomonadota</taxon>
        <taxon>Gammaproteobacteria</taxon>
        <taxon>Enterobacterales</taxon>
        <taxon>Enterobacteriaceae</taxon>
        <taxon>Salmonella</taxon>
    </lineage>
</organism>
<reference key="1">
    <citation type="submission" date="2007-11" db="EMBL/GenBank/DDBJ databases">
        <authorList>
            <consortium name="The Salmonella enterica serovar Arizonae Genome Sequencing Project"/>
            <person name="McClelland M."/>
            <person name="Sanderson E.K."/>
            <person name="Porwollik S."/>
            <person name="Spieth J."/>
            <person name="Clifton W.S."/>
            <person name="Fulton R."/>
            <person name="Chunyan W."/>
            <person name="Wollam A."/>
            <person name="Shah N."/>
            <person name="Pepin K."/>
            <person name="Bhonagiri V."/>
            <person name="Nash W."/>
            <person name="Johnson M."/>
            <person name="Thiruvilangam P."/>
            <person name="Wilson R."/>
        </authorList>
    </citation>
    <scope>NUCLEOTIDE SEQUENCE [LARGE SCALE GENOMIC DNA]</scope>
    <source>
        <strain>ATCC BAA-731 / CDC346-86 / RSK2980</strain>
    </source>
</reference>
<protein>
    <recommendedName>
        <fullName evidence="1">Cobalamin biosynthesis protein CbiB</fullName>
    </recommendedName>
</protein>
<keyword id="KW-1003">Cell membrane</keyword>
<keyword id="KW-0169">Cobalamin biosynthesis</keyword>
<keyword id="KW-0472">Membrane</keyword>
<keyword id="KW-1185">Reference proteome</keyword>
<keyword id="KW-0812">Transmembrane</keyword>
<keyword id="KW-1133">Transmembrane helix</keyword>
<evidence type="ECO:0000255" key="1">
    <source>
        <dbReference type="HAMAP-Rule" id="MF_00024"/>
    </source>
</evidence>
<proteinExistence type="inferred from homology"/>
<feature type="chain" id="PRO_1000074383" description="Cobalamin biosynthesis protein CbiB">
    <location>
        <begin position="1"/>
        <end position="319"/>
    </location>
</feature>
<feature type="transmembrane region" description="Helical" evidence="1">
    <location>
        <begin position="56"/>
        <end position="76"/>
    </location>
</feature>
<feature type="transmembrane region" description="Helical" evidence="1">
    <location>
        <begin position="82"/>
        <end position="102"/>
    </location>
</feature>
<feature type="transmembrane region" description="Helical" evidence="1">
    <location>
        <begin position="153"/>
        <end position="173"/>
    </location>
</feature>
<feature type="transmembrane region" description="Helical" evidence="1">
    <location>
        <begin position="204"/>
        <end position="224"/>
    </location>
</feature>
<feature type="transmembrane region" description="Helical" evidence="1">
    <location>
        <begin position="296"/>
        <end position="316"/>
    </location>
</feature>
<name>CBIB_SALAR</name>
<accession>A9MLR0</accession>
<comment type="function">
    <text evidence="1">Converts cobyric acid to cobinamide by the addition of aminopropanol on the F carboxylic group. However, the true cosubstrate could be (R)-1-amino-2-propanol O-2-phosphate, leading to cobinamide phosphate.</text>
</comment>
<comment type="pathway">
    <text evidence="1">Cofactor biosynthesis; adenosylcobalamin biosynthesis.</text>
</comment>
<comment type="subcellular location">
    <subcellularLocation>
        <location evidence="1">Cell membrane</location>
        <topology evidence="1">Multi-pass membrane protein</topology>
    </subcellularLocation>
</comment>
<comment type="similarity">
    <text evidence="1">Belongs to the CobD/CbiB family.</text>
</comment>